<gene>
    <name type="primary">pknG</name>
    <name type="ordered locus">Rv0410c</name>
    <name type="ORF">MTCY22G10.06c</name>
</gene>
<dbReference type="EC" id="2.7.11.1"/>
<dbReference type="EMBL" id="AL123456">
    <property type="protein sequence ID" value="CCP43141.1"/>
    <property type="molecule type" value="Genomic_DNA"/>
</dbReference>
<dbReference type="PIR" id="H70628">
    <property type="entry name" value="H70628"/>
</dbReference>
<dbReference type="RefSeq" id="NP_214924.1">
    <property type="nucleotide sequence ID" value="NC_000962.3"/>
</dbReference>
<dbReference type="RefSeq" id="WP_003402100.1">
    <property type="nucleotide sequence ID" value="NZ_NVQJ01000002.1"/>
</dbReference>
<dbReference type="PDB" id="2PZI">
    <property type="method" value="X-ray"/>
    <property type="resolution" value="2.40 A"/>
    <property type="chains" value="A/B=74-750"/>
</dbReference>
<dbReference type="PDB" id="4Y0X">
    <property type="method" value="X-ray"/>
    <property type="resolution" value="1.74 A"/>
    <property type="chains" value="A=74-405"/>
</dbReference>
<dbReference type="PDB" id="4Y12">
    <property type="method" value="X-ray"/>
    <property type="resolution" value="1.90 A"/>
    <property type="chains" value="A=74-405"/>
</dbReference>
<dbReference type="PDB" id="7Q52">
    <property type="method" value="X-ray"/>
    <property type="resolution" value="2.35 A"/>
    <property type="chains" value="AAA=74-405"/>
</dbReference>
<dbReference type="PDBsum" id="2PZI"/>
<dbReference type="PDBsum" id="4Y0X"/>
<dbReference type="PDBsum" id="4Y12"/>
<dbReference type="PDBsum" id="7Q52"/>
<dbReference type="SMR" id="P9WI73"/>
<dbReference type="FunCoup" id="P9WI73">
    <property type="interactions" value="3"/>
</dbReference>
<dbReference type="IntAct" id="P9WI73">
    <property type="interactions" value="1"/>
</dbReference>
<dbReference type="STRING" id="83332.Rv0410c"/>
<dbReference type="BindingDB" id="P9WI73"/>
<dbReference type="ChEMBL" id="CHEMBL6070"/>
<dbReference type="DrugBank" id="DB07398">
    <property type="generic name" value="2-[(CYCLOPROPYLCARBONYL)AMINO]-4,5,6,7-TETRAHYDRO-1-BENZOTHIOPHENE-3-CARBOXAMIDE"/>
</dbReference>
<dbReference type="iPTMnet" id="P9WI73"/>
<dbReference type="PaxDb" id="83332-Rv0410c"/>
<dbReference type="DNASU" id="886397"/>
<dbReference type="GeneID" id="886397"/>
<dbReference type="KEGG" id="mtu:Rv0410c"/>
<dbReference type="KEGG" id="mtv:RVBD_0410c"/>
<dbReference type="TubercuList" id="Rv0410c"/>
<dbReference type="eggNOG" id="COG0515">
    <property type="taxonomic scope" value="Bacteria"/>
</dbReference>
<dbReference type="InParanoid" id="P9WI73"/>
<dbReference type="OrthoDB" id="137117at2"/>
<dbReference type="PhylomeDB" id="P9WI73"/>
<dbReference type="BRENDA" id="2.7.11.1">
    <property type="organism ID" value="3445"/>
</dbReference>
<dbReference type="SABIO-RK" id="P9WI73"/>
<dbReference type="EvolutionaryTrace" id="P9WI73"/>
<dbReference type="PRO" id="PR:P9WI73"/>
<dbReference type="Proteomes" id="UP000001584">
    <property type="component" value="Chromosome"/>
</dbReference>
<dbReference type="GO" id="GO:0005829">
    <property type="term" value="C:cytosol"/>
    <property type="evidence" value="ECO:0000314"/>
    <property type="project" value="MTBBASE"/>
</dbReference>
<dbReference type="GO" id="GO:0005886">
    <property type="term" value="C:plasma membrane"/>
    <property type="evidence" value="ECO:0000314"/>
    <property type="project" value="MTBBASE"/>
</dbReference>
<dbReference type="GO" id="GO:0005524">
    <property type="term" value="F:ATP binding"/>
    <property type="evidence" value="ECO:0007669"/>
    <property type="project" value="UniProtKB-KW"/>
</dbReference>
<dbReference type="GO" id="GO:0042802">
    <property type="term" value="F:identical protein binding"/>
    <property type="evidence" value="ECO:0000353"/>
    <property type="project" value="IntAct"/>
</dbReference>
<dbReference type="GO" id="GO:0106310">
    <property type="term" value="F:protein serine kinase activity"/>
    <property type="evidence" value="ECO:0007669"/>
    <property type="project" value="RHEA"/>
</dbReference>
<dbReference type="GO" id="GO:0004674">
    <property type="term" value="F:protein serine/threonine kinase activity"/>
    <property type="evidence" value="ECO:0000314"/>
    <property type="project" value="UniProtKB"/>
</dbReference>
<dbReference type="GO" id="GO:0006538">
    <property type="term" value="P:glutamate catabolic process"/>
    <property type="evidence" value="ECO:0000315"/>
    <property type="project" value="MTBBASE"/>
</dbReference>
<dbReference type="GO" id="GO:0006543">
    <property type="term" value="P:glutamine catabolic process"/>
    <property type="evidence" value="ECO:0000315"/>
    <property type="project" value="MTBBASE"/>
</dbReference>
<dbReference type="GO" id="GO:0035556">
    <property type="term" value="P:intracellular signal transduction"/>
    <property type="evidence" value="ECO:0000314"/>
    <property type="project" value="UniProtKB"/>
</dbReference>
<dbReference type="GO" id="GO:0043457">
    <property type="term" value="P:regulation of cellular respiration"/>
    <property type="evidence" value="ECO:0000314"/>
    <property type="project" value="UniProtKB"/>
</dbReference>
<dbReference type="GO" id="GO:0046677">
    <property type="term" value="P:response to antibiotic"/>
    <property type="evidence" value="ECO:0007669"/>
    <property type="project" value="UniProtKB-KW"/>
</dbReference>
<dbReference type="GO" id="GO:0042783">
    <property type="term" value="P:symbiont-mediated evasion of host immune response"/>
    <property type="evidence" value="ECO:0000315"/>
    <property type="project" value="MTBBASE"/>
</dbReference>
<dbReference type="GO" id="GO:0030682">
    <property type="term" value="P:symbiont-mediated perturbation of host defenses"/>
    <property type="evidence" value="ECO:0000315"/>
    <property type="project" value="MTBBASE"/>
</dbReference>
<dbReference type="GO" id="GO:0052027">
    <property type="term" value="P:symbiont-mediated perturbation of host signal transduction pathway"/>
    <property type="evidence" value="ECO:0000315"/>
    <property type="project" value="MTBBASE"/>
</dbReference>
<dbReference type="GO" id="GO:0052170">
    <property type="term" value="P:symbiont-mediated suppression of host innate immune response"/>
    <property type="evidence" value="ECO:0000315"/>
    <property type="project" value="MTBBASE"/>
</dbReference>
<dbReference type="CDD" id="cd14014">
    <property type="entry name" value="STKc_PknB_like"/>
    <property type="match status" value="1"/>
</dbReference>
<dbReference type="DisProt" id="DP01153"/>
<dbReference type="FunFam" id="1.10.510.10:FF:000306">
    <property type="entry name" value="Serine/threonine protein kinase"/>
    <property type="match status" value="1"/>
</dbReference>
<dbReference type="FunFam" id="1.25.40.10:FF:000318">
    <property type="entry name" value="Serine/threonine protein kinase"/>
    <property type="match status" value="1"/>
</dbReference>
<dbReference type="FunFam" id="3.30.200.20:FF:000205">
    <property type="entry name" value="Serine/threonine protein kinase"/>
    <property type="match status" value="1"/>
</dbReference>
<dbReference type="FunFam" id="1.25.40.10:FF:000824">
    <property type="entry name" value="Serine/threonine-protein kinase PknG"/>
    <property type="match status" value="1"/>
</dbReference>
<dbReference type="Gene3D" id="3.30.200.20">
    <property type="entry name" value="Phosphorylase Kinase, domain 1"/>
    <property type="match status" value="1"/>
</dbReference>
<dbReference type="Gene3D" id="1.25.40.10">
    <property type="entry name" value="Tetratricopeptide repeat domain"/>
    <property type="match status" value="2"/>
</dbReference>
<dbReference type="Gene3D" id="1.10.510.10">
    <property type="entry name" value="Transferase(Phosphotransferase) domain 1"/>
    <property type="match status" value="1"/>
</dbReference>
<dbReference type="InterPro" id="IPR011009">
    <property type="entry name" value="Kinase-like_dom_sf"/>
</dbReference>
<dbReference type="InterPro" id="IPR031634">
    <property type="entry name" value="PknG_rubred"/>
</dbReference>
<dbReference type="InterPro" id="IPR031636">
    <property type="entry name" value="PknG_TPR"/>
</dbReference>
<dbReference type="InterPro" id="IPR000719">
    <property type="entry name" value="Prot_kinase_dom"/>
</dbReference>
<dbReference type="InterPro" id="IPR008271">
    <property type="entry name" value="Ser/Thr_kinase_AS"/>
</dbReference>
<dbReference type="InterPro" id="IPR011990">
    <property type="entry name" value="TPR-like_helical_dom_sf"/>
</dbReference>
<dbReference type="PANTHER" id="PTHR24363">
    <property type="entry name" value="SERINE/THREONINE PROTEIN KINASE"/>
    <property type="match status" value="1"/>
</dbReference>
<dbReference type="PANTHER" id="PTHR24363:SF0">
    <property type="entry name" value="SERINE_THREONINE KINASE LIKE DOMAIN CONTAINING 1"/>
    <property type="match status" value="1"/>
</dbReference>
<dbReference type="Pfam" id="PF00069">
    <property type="entry name" value="Pkinase"/>
    <property type="match status" value="1"/>
</dbReference>
<dbReference type="Pfam" id="PF16919">
    <property type="entry name" value="PknG_rubred"/>
    <property type="match status" value="1"/>
</dbReference>
<dbReference type="Pfam" id="PF16918">
    <property type="entry name" value="PknG_TPR"/>
    <property type="match status" value="1"/>
</dbReference>
<dbReference type="SMART" id="SM00220">
    <property type="entry name" value="S_TKc"/>
    <property type="match status" value="1"/>
</dbReference>
<dbReference type="SUPFAM" id="SSF56112">
    <property type="entry name" value="Protein kinase-like (PK-like)"/>
    <property type="match status" value="1"/>
</dbReference>
<dbReference type="SUPFAM" id="SSF48452">
    <property type="entry name" value="TPR-like"/>
    <property type="match status" value="1"/>
</dbReference>
<dbReference type="PROSITE" id="PS50011">
    <property type="entry name" value="PROTEIN_KINASE_DOM"/>
    <property type="match status" value="1"/>
</dbReference>
<dbReference type="PROSITE" id="PS00108">
    <property type="entry name" value="PROTEIN_KINASE_ST"/>
    <property type="match status" value="1"/>
</dbReference>
<accession>P9WI73</accession>
<accession>L0T3M0</accession>
<accession>P65728</accession>
<accession>P96256</accession>
<feature type="chain" id="PRO_0000171216" description="Serine/threonine-protein kinase PknG">
    <location>
        <begin position="1"/>
        <end position="750"/>
    </location>
</feature>
<feature type="domain" description="Protein kinase" evidence="1">
    <location>
        <begin position="151"/>
        <end position="396"/>
    </location>
</feature>
<feature type="repeat" description="TPR">
    <location>
        <begin position="536"/>
        <end position="569"/>
    </location>
</feature>
<feature type="region of interest" description="Disordered" evidence="3">
    <location>
        <begin position="1"/>
        <end position="66"/>
    </location>
</feature>
<feature type="compositionally biased region" description="Polar residues" evidence="3">
    <location>
        <begin position="17"/>
        <end position="34"/>
    </location>
</feature>
<feature type="active site" description="Proton acceptor" evidence="1 2">
    <location>
        <position position="276"/>
    </location>
</feature>
<feature type="binding site" evidence="1">
    <location>
        <begin position="157"/>
        <end position="165"/>
    </location>
    <ligand>
        <name>ATP</name>
        <dbReference type="ChEBI" id="CHEBI:30616"/>
    </ligand>
</feature>
<feature type="binding site" evidence="1">
    <location>
        <position position="181"/>
    </location>
    <ligand>
        <name>ATP</name>
        <dbReference type="ChEBI" id="CHEBI:30616"/>
    </ligand>
</feature>
<feature type="modified residue" description="Phosphothreonine; by autocatalysis" evidence="9">
    <location>
        <position position="63"/>
    </location>
</feature>
<feature type="mutagenesis site" description="Lack of phosphorylation. Does not affect kinase activity." evidence="9">
    <original>T</original>
    <variation>A</variation>
    <location>
        <position position="63"/>
    </location>
</feature>
<feature type="mutagenesis site" description="Decreases inhibition by AX20017; when associated with S-92." evidence="6">
    <original>I</original>
    <variation>S</variation>
    <location>
        <position position="87"/>
    </location>
</feature>
<feature type="mutagenesis site" description="Decreases inhibition by AX20017; when associated with S-87." evidence="6">
    <original>A</original>
    <variation>S</variation>
    <location>
        <position position="92"/>
    </location>
</feature>
<feature type="mutagenesis site" description="Decrease in activity; when associated with A-109; A-128 and A-131." evidence="6 9">
    <original>C</original>
    <variation>A</variation>
    <location>
        <position position="106"/>
    </location>
</feature>
<feature type="mutagenesis site" description="Lack of activity; when associated with S-109; S-128 and S-131." evidence="6 9">
    <original>C</original>
    <variation>S</variation>
    <location>
        <position position="106"/>
    </location>
</feature>
<feature type="mutagenesis site" description="Decrease in activity; when associated with A-106; A-128 and A-131." evidence="6 9">
    <original>C</original>
    <variation>A</variation>
    <location>
        <position position="109"/>
    </location>
</feature>
<feature type="mutagenesis site" description="Lack of activity; when associated with S-106; S-128 and S-131." evidence="6 9">
    <original>C</original>
    <variation>S</variation>
    <location>
        <position position="109"/>
    </location>
</feature>
<feature type="mutagenesis site" description="Decrease in activity; when associated with A-106; A-109 and A-131." evidence="6 9">
    <original>C</original>
    <variation>A</variation>
    <location>
        <position position="128"/>
    </location>
</feature>
<feature type="mutagenesis site" description="Lack of activity; when associated with S-106; S-109 and S-131." evidence="6 9">
    <original>C</original>
    <variation>S</variation>
    <location>
        <position position="128"/>
    </location>
</feature>
<feature type="mutagenesis site" description="Decrease in activity; when associated with A-106; A-109 and A-128." evidence="6 9">
    <original>C</original>
    <variation>A</variation>
    <location>
        <position position="131"/>
    </location>
</feature>
<feature type="mutagenesis site" description="Lack of activity; when associated with S-106; S-109 and S-128." evidence="6 9">
    <original>C</original>
    <variation>S</variation>
    <location>
        <position position="131"/>
    </location>
</feature>
<feature type="mutagenesis site" description="Lack of activity." evidence="4 9">
    <original>K</original>
    <variation>M</variation>
    <location>
        <position position="181"/>
    </location>
</feature>
<feature type="mutagenesis site" description="Lack of activity." evidence="9">
    <original>T</original>
    <variation>A</variation>
    <variation>D</variation>
    <variation>E</variation>
    <location>
        <position position="309"/>
    </location>
</feature>
<feature type="mutagenesis site" description="Decrease in activity." evidence="9">
    <original>T</original>
    <variation>S</variation>
    <location>
        <position position="309"/>
    </location>
</feature>
<feature type="turn" evidence="10">
    <location>
        <begin position="75"/>
        <end position="78"/>
    </location>
</feature>
<feature type="strand" evidence="10">
    <location>
        <begin position="79"/>
        <end position="82"/>
    </location>
</feature>
<feature type="helix" evidence="11">
    <location>
        <begin position="91"/>
        <end position="93"/>
    </location>
</feature>
<feature type="helix" evidence="11">
    <location>
        <begin position="101"/>
        <end position="103"/>
    </location>
</feature>
<feature type="turn" evidence="11">
    <location>
        <begin position="107"/>
        <end position="109"/>
    </location>
</feature>
<feature type="strand" evidence="11">
    <location>
        <begin position="124"/>
        <end position="127"/>
    </location>
</feature>
<feature type="turn" evidence="11">
    <location>
        <begin position="129"/>
        <end position="131"/>
    </location>
</feature>
<feature type="strand" evidence="11">
    <location>
        <begin position="134"/>
        <end position="136"/>
    </location>
</feature>
<feature type="turn" evidence="11">
    <location>
        <begin position="148"/>
        <end position="150"/>
    </location>
</feature>
<feature type="strand" evidence="11">
    <location>
        <begin position="151"/>
        <end position="160"/>
    </location>
</feature>
<feature type="strand" evidence="11">
    <location>
        <begin position="163"/>
        <end position="170"/>
    </location>
</feature>
<feature type="turn" evidence="11">
    <location>
        <begin position="171"/>
        <end position="175"/>
    </location>
</feature>
<feature type="strand" evidence="11">
    <location>
        <begin position="177"/>
        <end position="183"/>
    </location>
</feature>
<feature type="helix" evidence="11">
    <location>
        <begin position="189"/>
        <end position="199"/>
    </location>
</feature>
<feature type="helix" evidence="11">
    <location>
        <begin position="200"/>
        <end position="204"/>
    </location>
</feature>
<feature type="strand" evidence="11">
    <location>
        <begin position="213"/>
        <end position="220"/>
    </location>
</feature>
<feature type="strand" evidence="11">
    <location>
        <begin position="226"/>
        <end position="233"/>
    </location>
</feature>
<feature type="strand" evidence="11">
    <location>
        <begin position="237"/>
        <end position="239"/>
    </location>
</feature>
<feature type="helix" evidence="11">
    <location>
        <begin position="250"/>
        <end position="269"/>
    </location>
</feature>
<feature type="helix" evidence="11">
    <location>
        <begin position="279"/>
        <end position="281"/>
    </location>
</feature>
<feature type="strand" evidence="11">
    <location>
        <begin position="282"/>
        <end position="284"/>
    </location>
</feature>
<feature type="strand" evidence="11">
    <location>
        <begin position="289"/>
        <end position="291"/>
    </location>
</feature>
<feature type="helix" evidence="11">
    <location>
        <begin position="294"/>
        <end position="296"/>
    </location>
</feature>
<feature type="turn" evidence="11">
    <location>
        <begin position="310"/>
        <end position="312"/>
    </location>
</feature>
<feature type="helix" evidence="11">
    <location>
        <begin position="317"/>
        <end position="320"/>
    </location>
</feature>
<feature type="helix" evidence="11">
    <location>
        <begin position="324"/>
        <end position="339"/>
    </location>
</feature>
<feature type="helix" evidence="11">
    <location>
        <begin position="358"/>
        <end position="362"/>
    </location>
</feature>
<feature type="helix" evidence="11">
    <location>
        <begin position="364"/>
        <end position="373"/>
    </location>
</feature>
<feature type="helix" evidence="11">
    <location>
        <begin position="378"/>
        <end position="380"/>
    </location>
</feature>
<feature type="helix" evidence="11">
    <location>
        <begin position="385"/>
        <end position="403"/>
    </location>
</feature>
<feature type="strand" evidence="10">
    <location>
        <begin position="413"/>
        <end position="415"/>
    </location>
</feature>
<feature type="strand" evidence="10">
    <location>
        <begin position="423"/>
        <end position="425"/>
    </location>
</feature>
<feature type="helix" evidence="10">
    <location>
        <begin position="426"/>
        <end position="429"/>
    </location>
</feature>
<feature type="helix" evidence="10">
    <location>
        <begin position="430"/>
        <end position="432"/>
    </location>
</feature>
<feature type="helix" evidence="10">
    <location>
        <begin position="433"/>
        <end position="436"/>
    </location>
</feature>
<feature type="helix" evidence="10">
    <location>
        <begin position="446"/>
        <end position="452"/>
    </location>
</feature>
<feature type="helix" evidence="10">
    <location>
        <begin position="465"/>
        <end position="470"/>
    </location>
</feature>
<feature type="turn" evidence="10">
    <location>
        <begin position="471"/>
        <end position="473"/>
    </location>
</feature>
<feature type="helix" evidence="10">
    <location>
        <begin position="476"/>
        <end position="487"/>
    </location>
</feature>
<feature type="helix" evidence="10">
    <location>
        <begin position="503"/>
        <end position="515"/>
    </location>
</feature>
<feature type="helix" evidence="10">
    <location>
        <begin position="518"/>
        <end position="532"/>
    </location>
</feature>
<feature type="helix" evidence="10">
    <location>
        <begin position="536"/>
        <end position="549"/>
    </location>
</feature>
<feature type="helix" evidence="10">
    <location>
        <begin position="552"/>
        <end position="565"/>
    </location>
</feature>
<feature type="helix" evidence="10">
    <location>
        <begin position="571"/>
        <end position="583"/>
    </location>
</feature>
<feature type="helix" evidence="10">
    <location>
        <begin position="591"/>
        <end position="598"/>
    </location>
</feature>
<feature type="helix" evidence="10">
    <location>
        <begin position="603"/>
        <end position="615"/>
    </location>
</feature>
<feature type="helix" evidence="10">
    <location>
        <begin position="619"/>
        <end position="627"/>
    </location>
</feature>
<feature type="helix" evidence="10">
    <location>
        <begin position="636"/>
        <end position="646"/>
    </location>
</feature>
<feature type="helix" evidence="10">
    <location>
        <begin position="658"/>
        <end position="669"/>
    </location>
</feature>
<feature type="helix" evidence="10">
    <location>
        <begin position="678"/>
        <end position="693"/>
    </location>
</feature>
<feature type="strand" evidence="10">
    <location>
        <begin position="699"/>
        <end position="703"/>
    </location>
</feature>
<feature type="strand" evidence="10">
    <location>
        <begin position="706"/>
        <end position="709"/>
    </location>
</feature>
<feature type="helix" evidence="10">
    <location>
        <begin position="710"/>
        <end position="727"/>
    </location>
</feature>
<feature type="helix" evidence="10">
    <location>
        <begin position="731"/>
        <end position="744"/>
    </location>
</feature>
<reference key="1">
    <citation type="journal article" date="1998" name="Nature">
        <title>Deciphering the biology of Mycobacterium tuberculosis from the complete genome sequence.</title>
        <authorList>
            <person name="Cole S.T."/>
            <person name="Brosch R."/>
            <person name="Parkhill J."/>
            <person name="Garnier T."/>
            <person name="Churcher C.M."/>
            <person name="Harris D.E."/>
            <person name="Gordon S.V."/>
            <person name="Eiglmeier K."/>
            <person name="Gas S."/>
            <person name="Barry C.E. III"/>
            <person name="Tekaia F."/>
            <person name="Badcock K."/>
            <person name="Basham D."/>
            <person name="Brown D."/>
            <person name="Chillingworth T."/>
            <person name="Connor R."/>
            <person name="Davies R.M."/>
            <person name="Devlin K."/>
            <person name="Feltwell T."/>
            <person name="Gentles S."/>
            <person name="Hamlin N."/>
            <person name="Holroyd S."/>
            <person name="Hornsby T."/>
            <person name="Jagels K."/>
            <person name="Krogh A."/>
            <person name="McLean J."/>
            <person name="Moule S."/>
            <person name="Murphy L.D."/>
            <person name="Oliver S."/>
            <person name="Osborne J."/>
            <person name="Quail M.A."/>
            <person name="Rajandream M.A."/>
            <person name="Rogers J."/>
            <person name="Rutter S."/>
            <person name="Seeger K."/>
            <person name="Skelton S."/>
            <person name="Squares S."/>
            <person name="Squares R."/>
            <person name="Sulston J.E."/>
            <person name="Taylor K."/>
            <person name="Whitehead S."/>
            <person name="Barrell B.G."/>
        </authorList>
    </citation>
    <scope>NUCLEOTIDE SEQUENCE [LARGE SCALE GENOMIC DNA]</scope>
    <source>
        <strain>ATCC 25618 / H37Rv</strain>
    </source>
</reference>
<reference key="2">
    <citation type="journal article" date="2004" name="Mol. Microbiol.">
        <title>The Mycobacterium tuberculosis protein serine/threonine kinase PknG is linked to cellular glutamate/glutamine levels and is important for growth in vivo.</title>
        <authorList>
            <person name="Cowley S."/>
            <person name="Ko M."/>
            <person name="Pick N."/>
            <person name="Chow R."/>
            <person name="Downing K.J."/>
            <person name="Gordhan B.G."/>
            <person name="Betts J.C."/>
            <person name="Mizrahi V."/>
            <person name="Smith D.A."/>
            <person name="Stokes R.W."/>
            <person name="Av-Gay Y."/>
        </authorList>
    </citation>
    <scope>PROTEIN SEQUENCE OF 1-10</scope>
    <scope>CATALYTIC ACTIVITY</scope>
    <scope>SUBCELLULAR LOCATION</scope>
    <scope>AUTOPHOSPHORYLATION</scope>
    <scope>DISRUPTION PHENOTYPE</scope>
    <source>
        <strain>ATCC 25618 / H37Rv</strain>
    </source>
</reference>
<reference key="3">
    <citation type="journal article" date="2001" name="Microbiology">
        <title>Serine/threonine protein kinases PknF and PknG of Mycobacterium tuberculosis: characterization and localization.</title>
        <authorList>
            <person name="Koul A."/>
            <person name="Choidas A."/>
            <person name="Tyagi A.K."/>
            <person name="Drlica K."/>
            <person name="Singh Y."/>
            <person name="Ullrich A."/>
        </authorList>
    </citation>
    <scope>CATALYTIC ACTIVITY</scope>
    <scope>SUBCELLULAR LOCATION</scope>
    <scope>AUTOPHOSPHORYLATION</scope>
    <scope>MUTAGENESIS OF LYS-181</scope>
    <source>
        <strain>ATCC 25618 / H37Rv</strain>
    </source>
</reference>
<reference key="4">
    <citation type="journal article" date="2008" name="Mol. Microbiol.">
        <title>Regulation of glutamate metabolism by protein kinases in mycobacteria.</title>
        <authorList>
            <person name="O'Hare H.M."/>
            <person name="Duran R."/>
            <person name="Cervenansky C."/>
            <person name="Bellinzoni M."/>
            <person name="Wehenkel A.M."/>
            <person name="Pritsch O."/>
            <person name="Obal G."/>
            <person name="Baumgartner J."/>
            <person name="Vialaret J."/>
            <person name="Johnsson K."/>
            <person name="Alzari P.M."/>
        </authorList>
    </citation>
    <scope>FUNCTION</scope>
    <scope>CATALYTIC ACTIVITY</scope>
    <scope>ACTIVITY REGULATION</scope>
    <scope>INTERACTION WITH GARA</scope>
    <scope>AUTOPHOSPHORYLATION</scope>
    <source>
        <strain>ATCC 25618 / H37Rv</strain>
    </source>
</reference>
<reference key="5">
    <citation type="journal article" date="2009" name="Antimicrob. Agents Chemother.">
        <title>Protein kinase G is required for intrinsic antibiotic resistance in mycobacteria.</title>
        <authorList>
            <person name="Wolff K.A."/>
            <person name="Nguyen H.T."/>
            <person name="Cartabuke R.H."/>
            <person name="Singh A."/>
            <person name="Ogwang S."/>
            <person name="Nguyen L."/>
        </authorList>
    </citation>
    <scope>FUNCTION IN ANTIBIOTIC RESISTANCE</scope>
    <source>
        <strain>ATCC 25618 / H37Rv</strain>
    </source>
</reference>
<reference key="6">
    <citation type="journal article" date="2009" name="J. Biol. Chem.">
        <title>Key residues in Mycobacterium tuberculosis protein kinase G play a role in regulating kinase activity and survival in the host.</title>
        <authorList>
            <person name="Tiwari D."/>
            <person name="Singh R.K."/>
            <person name="Goswami K."/>
            <person name="Verma S.K."/>
            <person name="Prakash B."/>
            <person name="Nandicoori V.K."/>
        </authorList>
    </citation>
    <scope>FUNCTION</scope>
    <scope>CATALYTIC ACTIVITY</scope>
    <scope>BIOPHYSICOCHEMICAL PROPERTIES</scope>
    <scope>ACTIVITY REGULATION</scope>
    <scope>DOMAIN</scope>
    <scope>PHOSPHORYLATION AT THR-63</scope>
    <scope>MUTAGENESIS OF THR-63; CYS-106; CYS-109; CYS-128; CYS-131; LYS-181 AND THR-309</scope>
    <source>
        <strain>ATCC 25618 / H37Rv</strain>
    </source>
</reference>
<reference key="7">
    <citation type="journal article" date="2011" name="Mol. Cell. Proteomics">
        <title>Proteogenomic analysis of Mycobacterium tuberculosis by high resolution mass spectrometry.</title>
        <authorList>
            <person name="Kelkar D.S."/>
            <person name="Kumar D."/>
            <person name="Kumar P."/>
            <person name="Balakrishnan L."/>
            <person name="Muthusamy B."/>
            <person name="Yadav A.K."/>
            <person name="Shrivastava P."/>
            <person name="Marimuthu A."/>
            <person name="Anand S."/>
            <person name="Sundaram H."/>
            <person name="Kingsbury R."/>
            <person name="Harsha H.C."/>
            <person name="Nair B."/>
            <person name="Prasad T.S."/>
            <person name="Chauhan D.S."/>
            <person name="Katoch K."/>
            <person name="Katoch V.M."/>
            <person name="Kumar P."/>
            <person name="Chaerkady R."/>
            <person name="Ramachandran S."/>
            <person name="Dash D."/>
            <person name="Pandey A."/>
        </authorList>
    </citation>
    <scope>IDENTIFICATION BY MASS SPECTROMETRY [LARGE SCALE ANALYSIS]</scope>
    <source>
        <strain>ATCC 25618 / H37Rv</strain>
    </source>
</reference>
<reference key="8">
    <citation type="journal article" date="2007" name="Proc. Natl. Acad. Sci. U.S.A.">
        <title>Structural basis for the specific inhibition of protein kinase G, a virulence factor of Mycobacterium tuberculosis.</title>
        <authorList>
            <person name="Scherr N."/>
            <person name="Honnappa S."/>
            <person name="Kunz G."/>
            <person name="Mueller P."/>
            <person name="Jayachandran R."/>
            <person name="Winkler F."/>
            <person name="Pieters J."/>
            <person name="Steinmetz M.O."/>
        </authorList>
    </citation>
    <scope>X-RAY CRYSTALLOGRAPHY (2.4 ANGSTROMS) OF 74-750 IN COMPLEX WITH INHIBITOR AX20017</scope>
    <scope>FUNCTION</scope>
    <scope>ACTIVITY REGULATION</scope>
    <scope>SUBUNIT</scope>
    <scope>DOMAIN</scope>
    <scope>MUTAGENESIS OF ILE-87; ALA-92; CYS-106; CYS-109; CYS-128 AND CYS-131</scope>
</reference>
<evidence type="ECO:0000255" key="1">
    <source>
        <dbReference type="PROSITE-ProRule" id="PRU00159"/>
    </source>
</evidence>
<evidence type="ECO:0000255" key="2">
    <source>
        <dbReference type="PROSITE-ProRule" id="PRU10027"/>
    </source>
</evidence>
<evidence type="ECO:0000256" key="3">
    <source>
        <dbReference type="SAM" id="MobiDB-lite"/>
    </source>
</evidence>
<evidence type="ECO:0000269" key="4">
    <source>
    </source>
</evidence>
<evidence type="ECO:0000269" key="5">
    <source>
    </source>
</evidence>
<evidence type="ECO:0000269" key="6">
    <source>
    </source>
</evidence>
<evidence type="ECO:0000269" key="7">
    <source>
    </source>
</evidence>
<evidence type="ECO:0000269" key="8">
    <source>
    </source>
</evidence>
<evidence type="ECO:0000269" key="9">
    <source>
    </source>
</evidence>
<evidence type="ECO:0007829" key="10">
    <source>
        <dbReference type="PDB" id="2PZI"/>
    </source>
</evidence>
<evidence type="ECO:0007829" key="11">
    <source>
        <dbReference type="PDB" id="4Y0X"/>
    </source>
</evidence>
<keyword id="KW-0002">3D-structure</keyword>
<keyword id="KW-0046">Antibiotic resistance</keyword>
<keyword id="KW-0067">ATP-binding</keyword>
<keyword id="KW-1003">Cell membrane</keyword>
<keyword id="KW-0963">Cytoplasm</keyword>
<keyword id="KW-0903">Direct protein sequencing</keyword>
<keyword id="KW-0418">Kinase</keyword>
<keyword id="KW-0472">Membrane</keyword>
<keyword id="KW-0547">Nucleotide-binding</keyword>
<keyword id="KW-0597">Phosphoprotein</keyword>
<keyword id="KW-1185">Reference proteome</keyword>
<keyword id="KW-0723">Serine/threonine-protein kinase</keyword>
<keyword id="KW-0802">TPR repeat</keyword>
<keyword id="KW-0808">Transferase</keyword>
<keyword id="KW-0843">Virulence</keyword>
<proteinExistence type="evidence at protein level"/>
<protein>
    <recommendedName>
        <fullName>Serine/threonine-protein kinase PknG</fullName>
        <ecNumber>2.7.11.1</ecNumber>
    </recommendedName>
</protein>
<comment type="function">
    <text evidence="6 7 8 9">Phosphorylates GarA. May play a role in metabolic regulation via control of the phosphorylation status of GarA. Plays a crucial role in the survival of mycobacteria within host macrophages, by blocking the intracellular degradation of mycobacteria in lysosomes. Required for intrinsic antibiotic resistance.</text>
</comment>
<comment type="catalytic activity">
    <reaction evidence="4 5 7 9">
        <text>L-seryl-[protein] + ATP = O-phospho-L-seryl-[protein] + ADP + H(+)</text>
        <dbReference type="Rhea" id="RHEA:17989"/>
        <dbReference type="Rhea" id="RHEA-COMP:9863"/>
        <dbReference type="Rhea" id="RHEA-COMP:11604"/>
        <dbReference type="ChEBI" id="CHEBI:15378"/>
        <dbReference type="ChEBI" id="CHEBI:29999"/>
        <dbReference type="ChEBI" id="CHEBI:30616"/>
        <dbReference type="ChEBI" id="CHEBI:83421"/>
        <dbReference type="ChEBI" id="CHEBI:456216"/>
        <dbReference type="EC" id="2.7.11.1"/>
    </reaction>
</comment>
<comment type="catalytic activity">
    <reaction evidence="4 5 7 9">
        <text>L-threonyl-[protein] + ATP = O-phospho-L-threonyl-[protein] + ADP + H(+)</text>
        <dbReference type="Rhea" id="RHEA:46608"/>
        <dbReference type="Rhea" id="RHEA-COMP:11060"/>
        <dbReference type="Rhea" id="RHEA-COMP:11605"/>
        <dbReference type="ChEBI" id="CHEBI:15378"/>
        <dbReference type="ChEBI" id="CHEBI:30013"/>
        <dbReference type="ChEBI" id="CHEBI:30616"/>
        <dbReference type="ChEBI" id="CHEBI:61977"/>
        <dbReference type="ChEBI" id="CHEBI:456216"/>
        <dbReference type="EC" id="2.7.11.1"/>
    </reaction>
</comment>
<comment type="activity regulation">
    <text evidence="6 7 9">Kinase activity is regulated by the redox status of the environment via the rubredoxin domain. Autophosphorylation is not essential for kinase activity, but it promotes binding to GarA. The C-terminal domain also contributes to the regulation of activity. Inhibited by a specific small molecular-weight inhibitor, the tetrahydrobenzothiophene AX20017.</text>
</comment>
<comment type="biophysicochemical properties">
    <kinetics>
        <KM evidence="9">2122 nM for GarA</KM>
    </kinetics>
</comment>
<comment type="subunit">
    <text evidence="6 7">Homodimer. Interacts with the FHA domain of GarA.</text>
</comment>
<comment type="interaction">
    <interactant intactId="EBI-6405537">
        <id>P9WI73</id>
    </interactant>
    <interactant intactId="EBI-6405522">
        <id>P9WJA9</id>
        <label>garA</label>
    </interactant>
    <organismsDiffer>false</organismsDiffer>
    <experiments>6</experiments>
</comment>
<comment type="interaction">
    <interactant intactId="EBI-6405537">
        <id>P9WI73</id>
    </interactant>
    <interactant intactId="EBI-6405537">
        <id>P9WI73</id>
        <label>pknG</label>
    </interactant>
    <organismsDiffer>false</organismsDiffer>
    <experiments>4</experiments>
</comment>
<comment type="subcellular location">
    <subcellularLocation>
        <location>Cytoplasm</location>
    </subcellularLocation>
    <subcellularLocation>
        <location>Cell membrane</location>
    </subcellularLocation>
    <text>Also detected in growth media, suggesting that it can be translocated into host macrophages under specific conditions.</text>
</comment>
<comment type="domain">
    <text evidence="6 9">Contains an N-terminal rubredoxin domain, a central kinase domain and a C-terminal TPR domain.</text>
</comment>
<comment type="PTM">
    <text evidence="9">Autophosphorylated. In vitro, incorporates up to four phosphate groups on Thr-23, Thr-32 and Thr-63 and/or Thr-64 and/or Ser-65. In vivo, is probably phosphorylated only on Thr-63.</text>
</comment>
<comment type="disruption phenotype">
    <text evidence="5">Disruption causes delayed mortality in mice. Mutant accumulates glutamate and glutamine.</text>
</comment>
<comment type="similarity">
    <text evidence="1">Belongs to the protein kinase superfamily. Ser/Thr protein kinase family.</text>
</comment>
<organism>
    <name type="scientific">Mycobacterium tuberculosis (strain ATCC 25618 / H37Rv)</name>
    <dbReference type="NCBI Taxonomy" id="83332"/>
    <lineage>
        <taxon>Bacteria</taxon>
        <taxon>Bacillati</taxon>
        <taxon>Actinomycetota</taxon>
        <taxon>Actinomycetes</taxon>
        <taxon>Mycobacteriales</taxon>
        <taxon>Mycobacteriaceae</taxon>
        <taxon>Mycobacterium</taxon>
        <taxon>Mycobacterium tuberculosis complex</taxon>
    </lineage>
</organism>
<name>PKNG_MYCTU</name>
<sequence length="750" mass="81577">MAKASETERSGPGTQPADAQTATSATVRPLSTQAVFRPDFGDEDNFPHPTLGPDTEPQDRMATTSRVRPPVRRLGGGLVEIPRAPDIDPLEALMTNPVVPESKRFCWNCGRPVGRSDSETKGASEGWCPYCGSPYSFLPQLNPGDIVAGQYEVKGCIAHGGLGWIYLALDRNVNGRPVVLKGLVHSGDAEAQAMAMAERQFLAEVVHPSIVQIFNFVEHTDRHGDPVGYIVMEYVGGQSLKRSKGQKLPVAEAIAYLLEILPALSYLHSIGLVYNDLKPENIMLTEEQLKLIDLGAVSRINSFGYLYGTPGFQAPEIVRTGPTVATDIYTVGRTLAALTLDLPTRNGRYVDGLPEDDPVLKTYDSYGRLLRRAIDPDPRQRFTTAEEMSAQLTGVLREVVAQDTGVPRPGLSTIFSPSRSTFGVDLLVAHTDVYLDGQVHAEKLTANEIVTALSVPLVDPTDVAASVLQATVLSQPVQTLDSLRAARHGALDADGVDFSESVELPLMEVRALLDLGDVAKATRKLDDLAERVGWRWRLVWYRAVAELLTGDYDSATKHFTEVLDTFPGELAPKLALAATAELAGNTDEHKFYQTVWSTNDGVISAAFGLARARSAEGDRVGAVRTLDEVPPTSRHFTTARLTSAVTLLSGRSTSEVTEEQIRDAARRVEALPPTEPRVLQIRALVLGGALDWLKDNKASTNHILGFPFTSHGLRLGVEASLRSLARVAPTQRHRYTLVDMANKVRPTSTF</sequence>